<protein>
    <recommendedName>
        <fullName evidence="6">3-ketosteroid-9-alpha-monooxygenase, ferredoxin reductase component</fullName>
    </recommendedName>
    <alternativeName>
        <fullName evidence="6">3-ketosteroid-9-alpha-hydroxylase, ferredoxin reductase component</fullName>
        <shortName evidence="6">KSH</shortName>
    </alternativeName>
    <alternativeName>
        <fullName evidence="6">Androsta-1,4-diene-3,17-dione 9-alpha-hydroxylase</fullName>
        <ecNumber evidence="4 5">1.14.15.30</ecNumber>
    </alternativeName>
    <alternativeName>
        <fullName evidence="6">Rieske-type oxygenase</fullName>
        <shortName evidence="6">RO</shortName>
    </alternativeName>
</protein>
<keyword id="KW-0001">2Fe-2S</keyword>
<keyword id="KW-0153">Cholesterol metabolism</keyword>
<keyword id="KW-0274">FAD</keyword>
<keyword id="KW-0285">Flavoprotein</keyword>
<keyword id="KW-0408">Iron</keyword>
<keyword id="KW-0411">Iron-sulfur</keyword>
<keyword id="KW-0442">Lipid degradation</keyword>
<keyword id="KW-0443">Lipid metabolism</keyword>
<keyword id="KW-0479">Metal-binding</keyword>
<keyword id="KW-0560">Oxidoreductase</keyword>
<keyword id="KW-1185">Reference proteome</keyword>
<keyword id="KW-0753">Steroid metabolism</keyword>
<keyword id="KW-1207">Sterol metabolism</keyword>
<keyword id="KW-0843">Virulence</keyword>
<proteinExistence type="evidence at protein level"/>
<feature type="chain" id="PRO_0000404100" description="3-ketosteroid-9-alpha-monooxygenase, ferredoxin reductase component">
    <location>
        <begin position="1"/>
        <end position="358"/>
    </location>
</feature>
<feature type="domain" description="FAD-binding FR-type" evidence="2">
    <location>
        <begin position="12"/>
        <end position="124"/>
    </location>
</feature>
<feature type="domain" description="2Fe-2S ferredoxin-type" evidence="1">
    <location>
        <begin position="269"/>
        <end position="358"/>
    </location>
</feature>
<feature type="binding site" evidence="1">
    <location>
        <position position="305"/>
    </location>
    <ligand>
        <name>[2Fe-2S] cluster</name>
        <dbReference type="ChEBI" id="CHEBI:190135"/>
    </ligand>
</feature>
<feature type="binding site" evidence="1">
    <location>
        <position position="310"/>
    </location>
    <ligand>
        <name>[2Fe-2S] cluster</name>
        <dbReference type="ChEBI" id="CHEBI:190135"/>
    </ligand>
</feature>
<feature type="binding site" evidence="1">
    <location>
        <position position="313"/>
    </location>
    <ligand>
        <name>[2Fe-2S] cluster</name>
        <dbReference type="ChEBI" id="CHEBI:190135"/>
    </ligand>
</feature>
<feature type="binding site" evidence="1">
    <location>
        <position position="343"/>
    </location>
    <ligand>
        <name>[2Fe-2S] cluster</name>
        <dbReference type="ChEBI" id="CHEBI:190135"/>
    </ligand>
</feature>
<comment type="function">
    <text evidence="4 5">Involved in the degradation of cholesterol. Catalyzes the introduction of a 9a-hydroxyl moiety into 1,4-androstadiene-3,17-dione (ADD) to yield the 9alpha-hydroxy-1,4-androstadiene-3,17-dione (9OHADD) intermediate which spontaneously form 3-hydroxy-9,10-seconandrost-1,3,5(10)-triene-9,17-dione (HSA) via the meta-cleavage of ring B with concomitant aromatization of ring A. KSH is also able to use 4-androstene-3,17-dione (AD), 3-oxo-23,24-bisnorcholesta-4-en-22-oate (4-BNC), 3-oxo-23,24-bisnorcholesta-1,4-dien-22-oate (1,4-BNC), 3-oxo-23,24-bisnorcholesta-4-en-22-oyl-coenzyme A thioester (4-BNC-CoA) and 3-oxo-23,24-bisnorcholesta-1,4-dien-22-oyl-coenzyme A thioester (1,4-BNC-CoA) as substrates.</text>
</comment>
<comment type="catalytic activity">
    <reaction evidence="4 5">
        <text>androsta-1,4-diene-3,17-dione + 2 reduced [2Fe-2S]-[ferredoxin] + O2 + 2 H(+) = 9alpha-hydroxyandrosta-1,4-diene-3,17-dione + 2 oxidized [2Fe-2S]-[ferredoxin] + H2O</text>
        <dbReference type="Rhea" id="RHEA:32199"/>
        <dbReference type="Rhea" id="RHEA-COMP:10000"/>
        <dbReference type="Rhea" id="RHEA-COMP:10001"/>
        <dbReference type="ChEBI" id="CHEBI:15377"/>
        <dbReference type="ChEBI" id="CHEBI:15378"/>
        <dbReference type="ChEBI" id="CHEBI:15379"/>
        <dbReference type="ChEBI" id="CHEBI:33737"/>
        <dbReference type="ChEBI" id="CHEBI:33738"/>
        <dbReference type="ChEBI" id="CHEBI:40799"/>
        <dbReference type="ChEBI" id="CHEBI:63641"/>
        <dbReference type="EC" id="1.14.15.30"/>
    </reaction>
</comment>
<comment type="cofactor">
    <cofactor evidence="4">
        <name>FAD</name>
        <dbReference type="ChEBI" id="CHEBI:57692"/>
    </cofactor>
    <text evidence="4">Binds 1 FAD per subunit.</text>
</comment>
<comment type="cofactor">
    <cofactor evidence="1 4">
        <name>[2Fe-2S] cluster</name>
        <dbReference type="ChEBI" id="CHEBI:190135"/>
    </cofactor>
    <text evidence="1 4">Binds 1 2Fe-2S cluster.</text>
</comment>
<comment type="biophysicochemical properties">
    <kinetics>
        <KM evidence="5">3 uM for 4-BNC (at pH 7 and at 22 degrees Celsius)</KM>
        <KM evidence="5">6.8 uM for 4-BNC-CoA (at pH 7 and at 22 degrees Celsius)</KM>
        <KM evidence="5">17 uM for 1,4-BNC-CoA (at pH 7 and at 22 degrees Celsius)</KM>
        <KM evidence="4">24 uM for AD (at pH 7 and at 25 degrees Celsius)</KM>
        <KM evidence="5">70 uM for 1,4-BNC (at pH 7 and at 22 degrees Celsius)</KM>
        <KM evidence="4">110 uM for ADD (at pH 7 and at 25 degrees Celsius)</KM>
        <text evidence="4 5">kcat is 2.7 sec(-1) for 1,4-BNC-CoA as substrate (at pH 7 and at 22 degrees Celsius) (PubMed:21987574). kcat is 0.8 sec(-1) for ADD as substrate (at pH 7 and at 25 degrees Celsius) (PubMed:19234303). kcat is 0.61 sec(-1) for 4-BNC-CoA as substrate (at pH 7 and at 22 degrees Celsius) (PubMed:21987574). kcat is 0.25 sec(-1) for 1,4-BNC as substrate (at pH 7 and at 22 degrees Celsius) (PubMed:21987574). kcat is 0.08 sec(-1) for 4-BNC as substrate (at pH 7 and at 22 degrees Celsius) (PubMed:21987574). kcat is 0.07 sec(-1) for AD as substrate (at pH 7 and at 25 degrees Celsius) (PubMed:19234303).</text>
    </kinetics>
</comment>
<comment type="pathway">
    <text evidence="7">Lipid metabolism; steroid biosynthesis.</text>
</comment>
<comment type="subunit">
    <text evidence="5">Monomer. The two-component system 3-ketosteroid-9-alpha-monooxygenase is composed of an oxygenase component KshA and a reductase component KshB.</text>
</comment>
<comment type="induction">
    <text evidence="3">Induced by KstR.</text>
</comment>
<name>KSHB_MYCTU</name>
<evidence type="ECO:0000255" key="1">
    <source>
        <dbReference type="PROSITE-ProRule" id="PRU00465"/>
    </source>
</evidence>
<evidence type="ECO:0000255" key="2">
    <source>
        <dbReference type="PROSITE-ProRule" id="PRU00716"/>
    </source>
</evidence>
<evidence type="ECO:0000269" key="3">
    <source>
    </source>
</evidence>
<evidence type="ECO:0000269" key="4">
    <source>
    </source>
</evidence>
<evidence type="ECO:0000269" key="5">
    <source>
    </source>
</evidence>
<evidence type="ECO:0000303" key="6">
    <source>
    </source>
</evidence>
<evidence type="ECO:0000305" key="7">
    <source>
    </source>
</evidence>
<dbReference type="EC" id="1.14.15.30" evidence="4 5"/>
<dbReference type="EMBL" id="AL123456">
    <property type="protein sequence ID" value="CCP46394.1"/>
    <property type="molecule type" value="Genomic_DNA"/>
</dbReference>
<dbReference type="PIR" id="A70606">
    <property type="entry name" value="A70606"/>
</dbReference>
<dbReference type="RefSeq" id="NP_218088.1">
    <property type="nucleotide sequence ID" value="NC_000962.3"/>
</dbReference>
<dbReference type="RefSeq" id="WP_003900102.1">
    <property type="nucleotide sequence ID" value="NZ_NVQJ01000014.1"/>
</dbReference>
<dbReference type="SMR" id="P9WJ93"/>
<dbReference type="FunCoup" id="P9WJ93">
    <property type="interactions" value="133"/>
</dbReference>
<dbReference type="STRING" id="83332.Rv3571"/>
<dbReference type="PaxDb" id="83332-Rv3571"/>
<dbReference type="DNASU" id="887315"/>
<dbReference type="GeneID" id="887315"/>
<dbReference type="KEGG" id="mtu:Rv3571"/>
<dbReference type="KEGG" id="mtv:RVBD_3571"/>
<dbReference type="TubercuList" id="Rv3571"/>
<dbReference type="eggNOG" id="COG1018">
    <property type="taxonomic scope" value="Bacteria"/>
</dbReference>
<dbReference type="InParanoid" id="P9WJ93"/>
<dbReference type="OrthoDB" id="9796486at2"/>
<dbReference type="PhylomeDB" id="P9WJ93"/>
<dbReference type="BioCyc" id="MetaCyc:G185E-7849-MONOMER"/>
<dbReference type="BRENDA" id="1.14.15.30">
    <property type="organism ID" value="3445"/>
</dbReference>
<dbReference type="UniPathway" id="UPA00062"/>
<dbReference type="Proteomes" id="UP000001584">
    <property type="component" value="Chromosome"/>
</dbReference>
<dbReference type="GO" id="GO:0051537">
    <property type="term" value="F:2 iron, 2 sulfur cluster binding"/>
    <property type="evidence" value="ECO:0000314"/>
    <property type="project" value="MTBBASE"/>
</dbReference>
<dbReference type="GO" id="GO:0036200">
    <property type="term" value="F:3-ketosteroid 9-alpha-monooxygenase activity"/>
    <property type="evidence" value="ECO:0000314"/>
    <property type="project" value="UniProtKB"/>
</dbReference>
<dbReference type="GO" id="GO:0071949">
    <property type="term" value="F:FAD binding"/>
    <property type="evidence" value="ECO:0000314"/>
    <property type="project" value="MTBBASE"/>
</dbReference>
<dbReference type="GO" id="GO:0050660">
    <property type="term" value="F:flavin adenine dinucleotide binding"/>
    <property type="evidence" value="ECO:0000318"/>
    <property type="project" value="GO_Central"/>
</dbReference>
<dbReference type="GO" id="GO:0047086">
    <property type="term" value="F:ketosteroid monooxygenase activity"/>
    <property type="evidence" value="ECO:0000314"/>
    <property type="project" value="MTBBASE"/>
</dbReference>
<dbReference type="GO" id="GO:0046872">
    <property type="term" value="F:metal ion binding"/>
    <property type="evidence" value="ECO:0007669"/>
    <property type="project" value="UniProtKB-KW"/>
</dbReference>
<dbReference type="GO" id="GO:0016491">
    <property type="term" value="F:oxidoreductase activity"/>
    <property type="evidence" value="ECO:0000318"/>
    <property type="project" value="GO_Central"/>
</dbReference>
<dbReference type="GO" id="GO:0006707">
    <property type="term" value="P:cholesterol catabolic process"/>
    <property type="evidence" value="ECO:0000314"/>
    <property type="project" value="MTBBASE"/>
</dbReference>
<dbReference type="GO" id="GO:0008203">
    <property type="term" value="P:cholesterol metabolic process"/>
    <property type="evidence" value="ECO:0000314"/>
    <property type="project" value="MTBBASE"/>
</dbReference>
<dbReference type="GO" id="GO:0001666">
    <property type="term" value="P:response to hypoxia"/>
    <property type="evidence" value="ECO:0000270"/>
    <property type="project" value="MTBBASE"/>
</dbReference>
<dbReference type="GO" id="GO:0051409">
    <property type="term" value="P:response to nitrosative stress"/>
    <property type="evidence" value="ECO:0000270"/>
    <property type="project" value="MTBBASE"/>
</dbReference>
<dbReference type="GO" id="GO:0006694">
    <property type="term" value="P:steroid biosynthetic process"/>
    <property type="evidence" value="ECO:0007669"/>
    <property type="project" value="UniProtKB-UniPathway"/>
</dbReference>
<dbReference type="CDD" id="cd00207">
    <property type="entry name" value="fer2"/>
    <property type="match status" value="1"/>
</dbReference>
<dbReference type="CDD" id="cd06214">
    <property type="entry name" value="PA_degradation_oxidoreductase_like"/>
    <property type="match status" value="1"/>
</dbReference>
<dbReference type="FunFam" id="3.10.20.30:FF:000023">
    <property type="entry name" value="3-ketosteroid-9-alpha-hydroxylase reductase subunit"/>
    <property type="match status" value="1"/>
</dbReference>
<dbReference type="FunFam" id="2.40.30.10:FF:000133">
    <property type="entry name" value="Flavodoxin reductase Hmp"/>
    <property type="match status" value="1"/>
</dbReference>
<dbReference type="FunFam" id="3.40.50.80:FF:000044">
    <property type="entry name" value="Ring-1,2-phenylacetyl-CoA epoxidase subunit PaaE"/>
    <property type="match status" value="1"/>
</dbReference>
<dbReference type="Gene3D" id="3.10.20.30">
    <property type="match status" value="1"/>
</dbReference>
<dbReference type="Gene3D" id="3.40.50.80">
    <property type="entry name" value="Nucleotide-binding domain of ferredoxin-NADP reductase (FNR) module"/>
    <property type="match status" value="1"/>
</dbReference>
<dbReference type="Gene3D" id="2.40.30.10">
    <property type="entry name" value="Translation factors"/>
    <property type="match status" value="1"/>
</dbReference>
<dbReference type="InterPro" id="IPR036010">
    <property type="entry name" value="2Fe-2S_ferredoxin-like_sf"/>
</dbReference>
<dbReference type="InterPro" id="IPR001041">
    <property type="entry name" value="2Fe-2S_ferredoxin-type"/>
</dbReference>
<dbReference type="InterPro" id="IPR006058">
    <property type="entry name" value="2Fe2S_fd_BS"/>
</dbReference>
<dbReference type="InterPro" id="IPR012675">
    <property type="entry name" value="Beta-grasp_dom_sf"/>
</dbReference>
<dbReference type="InterPro" id="IPR008333">
    <property type="entry name" value="Cbr1-like_FAD-bd_dom"/>
</dbReference>
<dbReference type="InterPro" id="IPR017927">
    <property type="entry name" value="FAD-bd_FR_type"/>
</dbReference>
<dbReference type="InterPro" id="IPR001709">
    <property type="entry name" value="Flavoprot_Pyr_Nucl_cyt_Rdtase"/>
</dbReference>
<dbReference type="InterPro" id="IPR039261">
    <property type="entry name" value="FNR_nucleotide-bd"/>
</dbReference>
<dbReference type="InterPro" id="IPR050415">
    <property type="entry name" value="MRET"/>
</dbReference>
<dbReference type="InterPro" id="IPR001433">
    <property type="entry name" value="OxRdtase_FAD/NAD-bd"/>
</dbReference>
<dbReference type="InterPro" id="IPR017938">
    <property type="entry name" value="Riboflavin_synthase-like_b-brl"/>
</dbReference>
<dbReference type="PANTHER" id="PTHR47354:SF8">
    <property type="entry name" value="1,2-PHENYLACETYL-COA EPOXIDASE, SUBUNIT E"/>
    <property type="match status" value="1"/>
</dbReference>
<dbReference type="PANTHER" id="PTHR47354">
    <property type="entry name" value="NADH OXIDOREDUCTASE HCR"/>
    <property type="match status" value="1"/>
</dbReference>
<dbReference type="Pfam" id="PF00970">
    <property type="entry name" value="FAD_binding_6"/>
    <property type="match status" value="1"/>
</dbReference>
<dbReference type="Pfam" id="PF00111">
    <property type="entry name" value="Fer2"/>
    <property type="match status" value="1"/>
</dbReference>
<dbReference type="Pfam" id="PF00175">
    <property type="entry name" value="NAD_binding_1"/>
    <property type="match status" value="1"/>
</dbReference>
<dbReference type="PRINTS" id="PR00371">
    <property type="entry name" value="FPNCR"/>
</dbReference>
<dbReference type="PRINTS" id="PR00410">
    <property type="entry name" value="PHEHYDRXLASE"/>
</dbReference>
<dbReference type="SUPFAM" id="SSF54292">
    <property type="entry name" value="2Fe-2S ferredoxin-like"/>
    <property type="match status" value="1"/>
</dbReference>
<dbReference type="SUPFAM" id="SSF52343">
    <property type="entry name" value="Ferredoxin reductase-like, C-terminal NADP-linked domain"/>
    <property type="match status" value="1"/>
</dbReference>
<dbReference type="SUPFAM" id="SSF63380">
    <property type="entry name" value="Riboflavin synthase domain-like"/>
    <property type="match status" value="1"/>
</dbReference>
<dbReference type="PROSITE" id="PS00197">
    <property type="entry name" value="2FE2S_FER_1"/>
    <property type="match status" value="1"/>
</dbReference>
<dbReference type="PROSITE" id="PS51085">
    <property type="entry name" value="2FE2S_FER_2"/>
    <property type="match status" value="1"/>
</dbReference>
<dbReference type="PROSITE" id="PS51384">
    <property type="entry name" value="FAD_FR"/>
    <property type="match status" value="1"/>
</dbReference>
<organism>
    <name type="scientific">Mycobacterium tuberculosis (strain ATCC 25618 / H37Rv)</name>
    <dbReference type="NCBI Taxonomy" id="83332"/>
    <lineage>
        <taxon>Bacteria</taxon>
        <taxon>Bacillati</taxon>
        <taxon>Actinomycetota</taxon>
        <taxon>Actinomycetes</taxon>
        <taxon>Mycobacteriales</taxon>
        <taxon>Mycobacteriaceae</taxon>
        <taxon>Mycobacterium</taxon>
        <taxon>Mycobacterium tuberculosis complex</taxon>
    </lineage>
</organism>
<gene>
    <name type="primary">hmp</name>
    <name type="synonym">kshB</name>
    <name type="ordered locus">Rv3571</name>
</gene>
<sequence>MTEAIGDEPLGDHVLELQIAEVVDETDEARSLVFAVPDGSDDPEIPPRRLRYAPGQFLTLRVPSERTGSVARCYSLCSSPYTDDALAVTVKRTADGYASNWLCDHAQVGMRIHVLAPSGNFVPTTLDADFLLLAAGSGITPIMSICKSALAEGGGQVTLLYANRDDRSVIFGDALRELAAKYPDRLTVLHWLESLQGLPSASALAKLVAPYTDRPVFICGPGPFMQAARDALAALKVPAQQVHIEVFKSLESDPFAAVKVDDSGDEAPATAVVELDGQTHTVSWPRTAKLLDVLLAAGLDAPFSCREGHCGACACTLRAGKVNMGVNDVLEQQDLDEGLILACQSRPESDSVEVTYDE</sequence>
<reference key="1">
    <citation type="journal article" date="1998" name="Nature">
        <title>Deciphering the biology of Mycobacterium tuberculosis from the complete genome sequence.</title>
        <authorList>
            <person name="Cole S.T."/>
            <person name="Brosch R."/>
            <person name="Parkhill J."/>
            <person name="Garnier T."/>
            <person name="Churcher C.M."/>
            <person name="Harris D.E."/>
            <person name="Gordon S.V."/>
            <person name="Eiglmeier K."/>
            <person name="Gas S."/>
            <person name="Barry C.E. III"/>
            <person name="Tekaia F."/>
            <person name="Badcock K."/>
            <person name="Basham D."/>
            <person name="Brown D."/>
            <person name="Chillingworth T."/>
            <person name="Connor R."/>
            <person name="Davies R.M."/>
            <person name="Devlin K."/>
            <person name="Feltwell T."/>
            <person name="Gentles S."/>
            <person name="Hamlin N."/>
            <person name="Holroyd S."/>
            <person name="Hornsby T."/>
            <person name="Jagels K."/>
            <person name="Krogh A."/>
            <person name="McLean J."/>
            <person name="Moule S."/>
            <person name="Murphy L.D."/>
            <person name="Oliver S."/>
            <person name="Osborne J."/>
            <person name="Quail M.A."/>
            <person name="Rajandream M.A."/>
            <person name="Rogers J."/>
            <person name="Rutter S."/>
            <person name="Seeger K."/>
            <person name="Skelton S."/>
            <person name="Squares S."/>
            <person name="Squares R."/>
            <person name="Sulston J.E."/>
            <person name="Taylor K."/>
            <person name="Whitehead S."/>
            <person name="Barrell B.G."/>
        </authorList>
    </citation>
    <scope>NUCLEOTIDE SEQUENCE [LARGE SCALE GENOMIC DNA]</scope>
    <source>
        <strain>ATCC 25618 / H37Rv</strain>
    </source>
</reference>
<reference key="2">
    <citation type="journal article" date="2007" name="Mol. Microbiol.">
        <title>A highly conserved transcriptional repressor controls a large regulon involved in lipid degradation in Mycobacterium smegmatis and Mycobacterium tuberculosis.</title>
        <authorList>
            <person name="Kendall S.L."/>
            <person name="Withers M."/>
            <person name="Soffair C.N."/>
            <person name="Moreland N.J."/>
            <person name="Gurcha S."/>
            <person name="Sidders B."/>
            <person name="Frita R."/>
            <person name="Ten Bokum A."/>
            <person name="Besra G.S."/>
            <person name="Lott J.S."/>
            <person name="Stoker N.G."/>
        </authorList>
    </citation>
    <scope>INDUCTION</scope>
    <source>
        <strain>ATCC 25618 / H37Rv</strain>
    </source>
</reference>
<reference key="3">
    <citation type="journal article" date="2009" name="J. Biol. Chem.">
        <title>Characterization of 3-ketosteroid 9{alpha}-hydroxylase, a Rieske oxygenase in the cholesterol degradation pathway of Mycobacterium tuberculosis.</title>
        <authorList>
            <person name="Capyk J.K."/>
            <person name="D'Angelo I."/>
            <person name="Strynadka N.C."/>
            <person name="Eltis L.D."/>
        </authorList>
    </citation>
    <scope>FUNCTION AS A 3-KETOSTEROID-9-ALPHA-HYDROXYLASE</scope>
    <scope>CATALYTIC ACTIVITY</scope>
    <scope>BIOPHYSICOCHEMICAL PROPERTIES</scope>
    <scope>COFACTOR</scope>
    <scope>PATHWAY</scope>
    <scope>SUBSTRATE SPECIFICITY</scope>
    <source>
        <strain>ATCC 25618 / H37Rv</strain>
    </source>
</reference>
<reference key="4">
    <citation type="journal article" date="2011" name="J. Biol. Chem.">
        <title>Activity of 3-ketosteroid 9alpha-hydroxylase (KshAB) indicates cholesterol side chain and ring degradation occur simultaneously in Mycobacterium tuberculosis.</title>
        <authorList>
            <person name="Capyk J.K."/>
            <person name="Casabon I."/>
            <person name="Gruninger R."/>
            <person name="Strynadka N.C."/>
            <person name="Eltis L.D."/>
        </authorList>
    </citation>
    <scope>FUNCTION</scope>
    <scope>CATALYTIC ACTIVITY</scope>
    <scope>BIOPHYSICOCHEMICAL PROPERTIES</scope>
    <scope>SUBSTRATE SPECIFICITY</scope>
    <scope>SUBUNIT</scope>
</reference>
<reference key="5">
    <citation type="journal article" date="2011" name="Mol. Cell. Proteomics">
        <title>Proteogenomic analysis of Mycobacterium tuberculosis by high resolution mass spectrometry.</title>
        <authorList>
            <person name="Kelkar D.S."/>
            <person name="Kumar D."/>
            <person name="Kumar P."/>
            <person name="Balakrishnan L."/>
            <person name="Muthusamy B."/>
            <person name="Yadav A.K."/>
            <person name="Shrivastava P."/>
            <person name="Marimuthu A."/>
            <person name="Anand S."/>
            <person name="Sundaram H."/>
            <person name="Kingsbury R."/>
            <person name="Harsha H.C."/>
            <person name="Nair B."/>
            <person name="Prasad T.S."/>
            <person name="Chauhan D.S."/>
            <person name="Katoch K."/>
            <person name="Katoch V.M."/>
            <person name="Kumar P."/>
            <person name="Chaerkady R."/>
            <person name="Ramachandran S."/>
            <person name="Dash D."/>
            <person name="Pandey A."/>
        </authorList>
    </citation>
    <scope>IDENTIFICATION BY MASS SPECTROMETRY [LARGE SCALE ANALYSIS]</scope>
    <source>
        <strain>ATCC 25618 / H37Rv</strain>
    </source>
</reference>
<accession>P9WJ93</accession>
<accession>L0TD71</accession>
<accession>P96853</accession>
<accession>Q7D594</accession>